<dbReference type="EMBL" id="AAHF01000006">
    <property type="protein sequence ID" value="EAL88853.1"/>
    <property type="molecule type" value="Genomic_DNA"/>
</dbReference>
<dbReference type="RefSeq" id="XP_750891.1">
    <property type="nucleotide sequence ID" value="XM_745798.1"/>
</dbReference>
<dbReference type="SMR" id="Q4WMG1"/>
<dbReference type="FunCoup" id="Q4WMG1">
    <property type="interactions" value="725"/>
</dbReference>
<dbReference type="STRING" id="330879.Q4WMG1"/>
<dbReference type="EnsemblFungi" id="EAL88853">
    <property type="protein sequence ID" value="EAL88853"/>
    <property type="gene ID" value="AFUA_6G10020"/>
</dbReference>
<dbReference type="GeneID" id="3508196"/>
<dbReference type="KEGG" id="afm:AFUA_6G10020"/>
<dbReference type="VEuPathDB" id="FungiDB:Afu6g10020"/>
<dbReference type="eggNOG" id="KOG0570">
    <property type="taxonomic scope" value="Eukaryota"/>
</dbReference>
<dbReference type="HOGENOM" id="CLU_065214_0_1_1"/>
<dbReference type="InParanoid" id="Q4WMG1"/>
<dbReference type="OMA" id="IHDSYSM"/>
<dbReference type="OrthoDB" id="10253553at2759"/>
<dbReference type="Proteomes" id="UP000002530">
    <property type="component" value="Chromosome 6"/>
</dbReference>
<dbReference type="GO" id="GO:0070847">
    <property type="term" value="C:core mediator complex"/>
    <property type="evidence" value="ECO:0000318"/>
    <property type="project" value="GO_Central"/>
</dbReference>
<dbReference type="GO" id="GO:0016592">
    <property type="term" value="C:mediator complex"/>
    <property type="evidence" value="ECO:0000318"/>
    <property type="project" value="GO_Central"/>
</dbReference>
<dbReference type="GO" id="GO:0003712">
    <property type="term" value="F:transcription coregulator activity"/>
    <property type="evidence" value="ECO:0007669"/>
    <property type="project" value="InterPro"/>
</dbReference>
<dbReference type="GO" id="GO:0006357">
    <property type="term" value="P:regulation of transcription by RNA polymerase II"/>
    <property type="evidence" value="ECO:0000318"/>
    <property type="project" value="GO_Central"/>
</dbReference>
<dbReference type="Gene3D" id="6.10.140.1520">
    <property type="match status" value="1"/>
</dbReference>
<dbReference type="Gene3D" id="6.10.140.200">
    <property type="match status" value="1"/>
</dbReference>
<dbReference type="InterPro" id="IPR037212">
    <property type="entry name" value="Med7/Med21-like"/>
</dbReference>
<dbReference type="InterPro" id="IPR009244">
    <property type="entry name" value="Mediatior_Med7"/>
</dbReference>
<dbReference type="InterPro" id="IPR044888">
    <property type="entry name" value="Mediatior_Med7_sf"/>
</dbReference>
<dbReference type="PANTHER" id="PTHR21428">
    <property type="entry name" value="MEDIATOR OF RNA POLYMERASE II TRANSCRIPTION SUBUNIT 7"/>
    <property type="match status" value="1"/>
</dbReference>
<dbReference type="PANTHER" id="PTHR21428:SF11">
    <property type="entry name" value="MEDIATOR OF RNA POLYMERASE II TRANSCRIPTION SUBUNIT 7"/>
    <property type="match status" value="1"/>
</dbReference>
<dbReference type="Pfam" id="PF05983">
    <property type="entry name" value="Med7"/>
    <property type="match status" value="1"/>
</dbReference>
<dbReference type="SUPFAM" id="SSF140718">
    <property type="entry name" value="Mediator hinge subcomplex-like"/>
    <property type="match status" value="1"/>
</dbReference>
<sequence>MAEAGKPRPLTAFAPPPPLWKHFTQDNLKRLEDIKKEASKGEDGKPRKKKWTPAELRALQLPPELRFLVPPEIPKSGQYSVFGELQSLSTTLPSLQEQGIEQLYPSTPTETDPDKPSQPSRPFNHAYYLLKISKSLLLNFLEFVGILSIAPEQFQSKVEDLRNLFINAHHLLNLYRPHQARESLIMMMEEQLNRSREEIQQMDKMHAEINGFLEQLKAQGIDIDSASKSREDVTAKRATGDQDANNANSSRLVWDILDGTD</sequence>
<keyword id="KW-0010">Activator</keyword>
<keyword id="KW-0539">Nucleus</keyword>
<keyword id="KW-1185">Reference proteome</keyword>
<keyword id="KW-0804">Transcription</keyword>
<keyword id="KW-0805">Transcription regulation</keyword>
<evidence type="ECO:0000250" key="1"/>
<evidence type="ECO:0000256" key="2">
    <source>
        <dbReference type="SAM" id="MobiDB-lite"/>
    </source>
</evidence>
<evidence type="ECO:0000305" key="3"/>
<gene>
    <name type="primary">med7</name>
    <name type="ORF">AFUA_6G10020</name>
</gene>
<accession>Q4WMG1</accession>
<reference key="1">
    <citation type="journal article" date="2005" name="Nature">
        <title>Genomic sequence of the pathogenic and allergenic filamentous fungus Aspergillus fumigatus.</title>
        <authorList>
            <person name="Nierman W.C."/>
            <person name="Pain A."/>
            <person name="Anderson M.J."/>
            <person name="Wortman J.R."/>
            <person name="Kim H.S."/>
            <person name="Arroyo J."/>
            <person name="Berriman M."/>
            <person name="Abe K."/>
            <person name="Archer D.B."/>
            <person name="Bermejo C."/>
            <person name="Bennett J.W."/>
            <person name="Bowyer P."/>
            <person name="Chen D."/>
            <person name="Collins M."/>
            <person name="Coulsen R."/>
            <person name="Davies R."/>
            <person name="Dyer P.S."/>
            <person name="Farman M.L."/>
            <person name="Fedorova N."/>
            <person name="Fedorova N.D."/>
            <person name="Feldblyum T.V."/>
            <person name="Fischer R."/>
            <person name="Fosker N."/>
            <person name="Fraser A."/>
            <person name="Garcia J.L."/>
            <person name="Garcia M.J."/>
            <person name="Goble A."/>
            <person name="Goldman G.H."/>
            <person name="Gomi K."/>
            <person name="Griffith-Jones S."/>
            <person name="Gwilliam R."/>
            <person name="Haas B.J."/>
            <person name="Haas H."/>
            <person name="Harris D.E."/>
            <person name="Horiuchi H."/>
            <person name="Huang J."/>
            <person name="Humphray S."/>
            <person name="Jimenez J."/>
            <person name="Keller N."/>
            <person name="Khouri H."/>
            <person name="Kitamoto K."/>
            <person name="Kobayashi T."/>
            <person name="Konzack S."/>
            <person name="Kulkarni R."/>
            <person name="Kumagai T."/>
            <person name="Lafton A."/>
            <person name="Latge J.-P."/>
            <person name="Li W."/>
            <person name="Lord A."/>
            <person name="Lu C."/>
            <person name="Majoros W.H."/>
            <person name="May G.S."/>
            <person name="Miller B.L."/>
            <person name="Mohamoud Y."/>
            <person name="Molina M."/>
            <person name="Monod M."/>
            <person name="Mouyna I."/>
            <person name="Mulligan S."/>
            <person name="Murphy L.D."/>
            <person name="O'Neil S."/>
            <person name="Paulsen I."/>
            <person name="Penalva M.A."/>
            <person name="Pertea M."/>
            <person name="Price C."/>
            <person name="Pritchard B.L."/>
            <person name="Quail M.A."/>
            <person name="Rabbinowitsch E."/>
            <person name="Rawlins N."/>
            <person name="Rajandream M.A."/>
            <person name="Reichard U."/>
            <person name="Renauld H."/>
            <person name="Robson G.D."/>
            <person name="Rodriguez de Cordoba S."/>
            <person name="Rodriguez-Pena J.M."/>
            <person name="Ronning C.M."/>
            <person name="Rutter S."/>
            <person name="Salzberg S.L."/>
            <person name="Sanchez M."/>
            <person name="Sanchez-Ferrero J.C."/>
            <person name="Saunders D."/>
            <person name="Seeger K."/>
            <person name="Squares R."/>
            <person name="Squares S."/>
            <person name="Takeuchi M."/>
            <person name="Tekaia F."/>
            <person name="Turner G."/>
            <person name="Vazquez de Aldana C.R."/>
            <person name="Weidman J."/>
            <person name="White O."/>
            <person name="Woodward J.R."/>
            <person name="Yu J.-H."/>
            <person name="Fraser C.M."/>
            <person name="Galagan J.E."/>
            <person name="Asai K."/>
            <person name="Machida M."/>
            <person name="Hall N."/>
            <person name="Barrell B.G."/>
            <person name="Denning D.W."/>
        </authorList>
    </citation>
    <scope>NUCLEOTIDE SEQUENCE [LARGE SCALE GENOMIC DNA]</scope>
    <source>
        <strain>ATCC MYA-4609 / CBS 101355 / FGSC A1100 / Af293</strain>
    </source>
</reference>
<organism>
    <name type="scientific">Aspergillus fumigatus (strain ATCC MYA-4609 / CBS 101355 / FGSC A1100 / Af293)</name>
    <name type="common">Neosartorya fumigata</name>
    <dbReference type="NCBI Taxonomy" id="330879"/>
    <lineage>
        <taxon>Eukaryota</taxon>
        <taxon>Fungi</taxon>
        <taxon>Dikarya</taxon>
        <taxon>Ascomycota</taxon>
        <taxon>Pezizomycotina</taxon>
        <taxon>Eurotiomycetes</taxon>
        <taxon>Eurotiomycetidae</taxon>
        <taxon>Eurotiales</taxon>
        <taxon>Aspergillaceae</taxon>
        <taxon>Aspergillus</taxon>
        <taxon>Aspergillus subgen. Fumigati</taxon>
    </lineage>
</organism>
<protein>
    <recommendedName>
        <fullName>Mediator of RNA polymerase II transcription subunit 7</fullName>
    </recommendedName>
    <alternativeName>
        <fullName>Mediator complex subunit 7</fullName>
    </alternativeName>
</protein>
<comment type="function">
    <text evidence="1">Component of the Mediator complex, a coactivator involved in the regulated transcription of nearly all RNA polymerase II-dependent genes. Mediator functions as a bridge to convey information from gene-specific regulatory proteins to the basal RNA polymerase II transcription machinery. Mediator is recruited to promoters by direct interactions with regulatory proteins and serves as a scaffold for the assembly of a functional preinitiation complex with RNA polymerase II and the general transcription factors (By similarity).</text>
</comment>
<comment type="subunit">
    <text evidence="1">Component of the Mediator complex.</text>
</comment>
<comment type="subcellular location">
    <subcellularLocation>
        <location evidence="1">Nucleus</location>
    </subcellularLocation>
</comment>
<comment type="similarity">
    <text evidence="3">Belongs to the Mediator complex subunit 7 family.</text>
</comment>
<name>MED7_ASPFU</name>
<feature type="chain" id="PRO_0000303192" description="Mediator of RNA polymerase II transcription subunit 7">
    <location>
        <begin position="1"/>
        <end position="261"/>
    </location>
</feature>
<feature type="region of interest" description="Disordered" evidence="2">
    <location>
        <begin position="31"/>
        <end position="54"/>
    </location>
</feature>
<feature type="compositionally biased region" description="Basic and acidic residues" evidence="2">
    <location>
        <begin position="31"/>
        <end position="45"/>
    </location>
</feature>
<proteinExistence type="inferred from homology"/>